<accession>P0DI90</accession>
<sequence length="20" mass="2310">ADDKNPLEECFCEDDDYCEG</sequence>
<dbReference type="EC" id="1.4.3.2" evidence="3"/>
<dbReference type="SABIO-RK" id="P0DI90"/>
<dbReference type="GO" id="GO:0005576">
    <property type="term" value="C:extracellular region"/>
    <property type="evidence" value="ECO:0007669"/>
    <property type="project" value="UniProtKB-SubCell"/>
</dbReference>
<dbReference type="GO" id="GO:0106329">
    <property type="term" value="F:L-phenylalaine oxidase activity"/>
    <property type="evidence" value="ECO:0007669"/>
    <property type="project" value="RHEA"/>
</dbReference>
<dbReference type="GO" id="GO:0090729">
    <property type="term" value="F:toxin activity"/>
    <property type="evidence" value="ECO:0007669"/>
    <property type="project" value="UniProtKB-KW"/>
</dbReference>
<dbReference type="GO" id="GO:0006915">
    <property type="term" value="P:apoptotic process"/>
    <property type="evidence" value="ECO:0007669"/>
    <property type="project" value="UniProtKB-KW"/>
</dbReference>
<dbReference type="GO" id="GO:0042742">
    <property type="term" value="P:defense response to bacterium"/>
    <property type="evidence" value="ECO:0007669"/>
    <property type="project" value="UniProtKB-KW"/>
</dbReference>
<dbReference type="GO" id="GO:0031640">
    <property type="term" value="P:killing of cells of another organism"/>
    <property type="evidence" value="ECO:0007669"/>
    <property type="project" value="UniProtKB-KW"/>
</dbReference>
<protein>
    <recommendedName>
        <fullName evidence="4">L-amino-acid oxidase L2</fullName>
        <shortName evidence="4">LAAO-L2</shortName>
        <shortName>LAO</shortName>
        <ecNumber evidence="3">1.4.3.2</ecNumber>
    </recommendedName>
</protein>
<name>OXLA2_DABRR</name>
<keyword id="KW-0044">Antibiotic</keyword>
<keyword id="KW-0929">Antimicrobial</keyword>
<keyword id="KW-0053">Apoptosis</keyword>
<keyword id="KW-0204">Cytolysis</keyword>
<keyword id="KW-0903">Direct protein sequencing</keyword>
<keyword id="KW-1015">Disulfide bond</keyword>
<keyword id="KW-0274">FAD</keyword>
<keyword id="KW-0285">Flavoprotein</keyword>
<keyword id="KW-0325">Glycoprotein</keyword>
<keyword id="KW-0354">Hemolysis</keyword>
<keyword id="KW-1199">Hemostasis impairing toxin</keyword>
<keyword id="KW-0560">Oxidoreductase</keyword>
<keyword id="KW-0964">Secreted</keyword>
<keyword id="KW-0800">Toxin</keyword>
<organism>
    <name type="scientific">Daboia russelii</name>
    <name type="common">Russel's viper</name>
    <name type="synonym">Vipera russelii</name>
    <dbReference type="NCBI Taxonomy" id="8707"/>
    <lineage>
        <taxon>Eukaryota</taxon>
        <taxon>Metazoa</taxon>
        <taxon>Chordata</taxon>
        <taxon>Craniata</taxon>
        <taxon>Vertebrata</taxon>
        <taxon>Euteleostomi</taxon>
        <taxon>Lepidosauria</taxon>
        <taxon>Squamata</taxon>
        <taxon>Bifurcata</taxon>
        <taxon>Unidentata</taxon>
        <taxon>Episquamata</taxon>
        <taxon>Toxicofera</taxon>
        <taxon>Serpentes</taxon>
        <taxon>Colubroidea</taxon>
        <taxon>Viperidae</taxon>
        <taxon>Viperinae</taxon>
        <taxon>Daboia</taxon>
    </lineage>
</organism>
<evidence type="ECO:0000250" key="1"/>
<evidence type="ECO:0000250" key="2">
    <source>
        <dbReference type="UniProtKB" id="P81382"/>
    </source>
</evidence>
<evidence type="ECO:0000269" key="3">
    <source>
    </source>
</evidence>
<evidence type="ECO:0000303" key="4">
    <source>
    </source>
</evidence>
<evidence type="ECO:0000305" key="5"/>
<evidence type="ECO:0000305" key="6">
    <source>
    </source>
</evidence>
<comment type="function">
    <text evidence="1 3">Catalyzes an oxidative deamination of predominantly hydrophobic and aromatic L-amino acids, thus producing hydrogen peroxide that may contribute to the diverse toxic effects of this enzyme (PubMed:18384385). Is active on L-Ile, L-Leu, L-Met, L-Phe, L-Trp, and L-Tyr (PubMed:18384385). Exhibits diverse biological activities, such as hemorrhage, hemolysis, edema, apoptosis of vascular endothelial cells or tumor cell lines, antibacterial and antiparasitic activities, as well as regulation of platelet aggregation. Its effect on platelets is controversial, since it either induces aggregation or inhibits agonist-induced aggregation. These different effects are probably due to different experimental conditions.</text>
</comment>
<comment type="catalytic activity">
    <reaction evidence="3">
        <text>an L-alpha-amino acid + O2 + H2O = a 2-oxocarboxylate + H2O2 + NH4(+)</text>
        <dbReference type="Rhea" id="RHEA:13781"/>
        <dbReference type="ChEBI" id="CHEBI:15377"/>
        <dbReference type="ChEBI" id="CHEBI:15379"/>
        <dbReference type="ChEBI" id="CHEBI:16240"/>
        <dbReference type="ChEBI" id="CHEBI:28938"/>
        <dbReference type="ChEBI" id="CHEBI:35179"/>
        <dbReference type="ChEBI" id="CHEBI:59869"/>
        <dbReference type="EC" id="1.4.3.2"/>
    </reaction>
</comment>
<comment type="catalytic activity">
    <reaction evidence="3">
        <text>L-leucine + O2 + H2O = 4-methyl-2-oxopentanoate + H2O2 + NH4(+)</text>
        <dbReference type="Rhea" id="RHEA:60996"/>
        <dbReference type="ChEBI" id="CHEBI:15377"/>
        <dbReference type="ChEBI" id="CHEBI:15379"/>
        <dbReference type="ChEBI" id="CHEBI:16240"/>
        <dbReference type="ChEBI" id="CHEBI:17865"/>
        <dbReference type="ChEBI" id="CHEBI:28938"/>
        <dbReference type="ChEBI" id="CHEBI:57427"/>
    </reaction>
</comment>
<comment type="catalytic activity">
    <reaction evidence="3">
        <text>L-phenylalanine + O2 + H2O = 3-phenylpyruvate + H2O2 + NH4(+)</text>
        <dbReference type="Rhea" id="RHEA:61240"/>
        <dbReference type="ChEBI" id="CHEBI:15377"/>
        <dbReference type="ChEBI" id="CHEBI:15379"/>
        <dbReference type="ChEBI" id="CHEBI:16240"/>
        <dbReference type="ChEBI" id="CHEBI:18005"/>
        <dbReference type="ChEBI" id="CHEBI:28938"/>
        <dbReference type="ChEBI" id="CHEBI:58095"/>
    </reaction>
</comment>
<comment type="catalytic activity">
    <reaction evidence="3">
        <text>L-tryptophan + O2 + H2O = indole-3-pyruvate + H2O2 + NH4(+)</text>
        <dbReference type="Rhea" id="RHEA:61244"/>
        <dbReference type="ChEBI" id="CHEBI:15377"/>
        <dbReference type="ChEBI" id="CHEBI:15379"/>
        <dbReference type="ChEBI" id="CHEBI:16240"/>
        <dbReference type="ChEBI" id="CHEBI:17640"/>
        <dbReference type="ChEBI" id="CHEBI:28938"/>
        <dbReference type="ChEBI" id="CHEBI:57912"/>
    </reaction>
</comment>
<comment type="catalytic activity">
    <reaction evidence="3">
        <text>L-methionine + O2 + H2O = 4-methylsulfanyl-2-oxobutanoate + H2O2 + NH4(+)</text>
        <dbReference type="Rhea" id="RHEA:61236"/>
        <dbReference type="ChEBI" id="CHEBI:15377"/>
        <dbReference type="ChEBI" id="CHEBI:15379"/>
        <dbReference type="ChEBI" id="CHEBI:16240"/>
        <dbReference type="ChEBI" id="CHEBI:16723"/>
        <dbReference type="ChEBI" id="CHEBI:28938"/>
        <dbReference type="ChEBI" id="CHEBI:57844"/>
    </reaction>
</comment>
<comment type="catalytic activity">
    <reaction evidence="3">
        <text>L-isoleucine + O2 + H2O = (S)-3-methyl-2-oxopentanoate + H2O2 + NH4(+)</text>
        <dbReference type="Rhea" id="RHEA:61232"/>
        <dbReference type="ChEBI" id="CHEBI:15377"/>
        <dbReference type="ChEBI" id="CHEBI:15379"/>
        <dbReference type="ChEBI" id="CHEBI:16240"/>
        <dbReference type="ChEBI" id="CHEBI:28938"/>
        <dbReference type="ChEBI" id="CHEBI:35146"/>
        <dbReference type="ChEBI" id="CHEBI:58045"/>
    </reaction>
</comment>
<comment type="catalytic activity">
    <reaction evidence="3">
        <text>L-tyrosine + O2 + H2O = 3-(4-hydroxyphenyl)pyruvate + H2O2 + NH4(+)</text>
        <dbReference type="Rhea" id="RHEA:61248"/>
        <dbReference type="ChEBI" id="CHEBI:15377"/>
        <dbReference type="ChEBI" id="CHEBI:15379"/>
        <dbReference type="ChEBI" id="CHEBI:16240"/>
        <dbReference type="ChEBI" id="CHEBI:28938"/>
        <dbReference type="ChEBI" id="CHEBI:36242"/>
        <dbReference type="ChEBI" id="CHEBI:58315"/>
    </reaction>
</comment>
<comment type="cofactor">
    <cofactor evidence="3">
        <name>FAD</name>
        <dbReference type="ChEBI" id="CHEBI:57692"/>
    </cofactor>
</comment>
<comment type="biophysicochemical properties">
    <kinetics>
        <KM evidence="3">1.89 mM for L-Ile</KM>
        <KM evidence="3">599.7 uM for L-Leu</KM>
        <KM evidence="3">222.8 uM for L-Met</KM>
        <KM evidence="3">49.3 uM for L-Phe</KM>
        <KM evidence="3">235.1 uM for L-Trp</KM>
        <KM evidence="3">538.2 uM for L-Tyr</KM>
        <Vmax evidence="3">6.94 umol/min/mg enzyme toward L-Phe</Vmax>
    </kinetics>
</comment>
<comment type="subunit">
    <text evidence="3 5">Monomer (Probable). This is in contrast with most of its orthologs, that are non-covalently linked homodimers.</text>
</comment>
<comment type="subcellular location">
    <subcellularLocation>
        <location evidence="3">Secreted</location>
    </subcellularLocation>
</comment>
<comment type="tissue specificity">
    <text evidence="6">Expressed by the venom gland.</text>
</comment>
<comment type="PTM">
    <text evidence="6">N-glycosylated.</text>
</comment>
<comment type="similarity">
    <text evidence="5">Belongs to the flavin monoamine oxidase family. FIG1 subfamily.</text>
</comment>
<reference key="1">
    <citation type="journal article" date="2008" name="FEBS J.">
        <title>Two L-amino acid oxidase isoenzymes from Russell's viper (Daboia russelli russelli) venom with different mechanisms of inhibition by substrate analogs.</title>
        <authorList>
            <person name="Mandal S."/>
            <person name="Bhattacharyya D."/>
        </authorList>
    </citation>
    <scope>PROTEIN SEQUENCE</scope>
    <scope>GLYCOSYLATION</scope>
    <scope>COFACTOR</scope>
    <scope>BIOPHYSICOCHEMICAL PROPERTIES</scope>
    <scope>SUBUNIT</scope>
    <scope>INHIBITION BY SUBSTRATE ANALOGS</scope>
    <scope>CATALYTIC ACTIVITY</scope>
    <scope>SUBCELLULAR LOCATION</scope>
    <scope>SUBSTRATE SPECIFICITY</scope>
    <source>
        <tissue>Venom</tissue>
    </source>
</reference>
<feature type="chain" id="PRO_0000412601" description="L-amino-acid oxidase L2">
    <location>
        <begin position="1"/>
        <end position="20" status="greater than"/>
    </location>
</feature>
<feature type="disulfide bond" evidence="2">
    <location>
        <begin position="10"/>
        <end status="unknown"/>
    </location>
</feature>
<feature type="non-terminal residue" evidence="4">
    <location>
        <position position="20"/>
    </location>
</feature>
<proteinExistence type="evidence at protein level"/>